<keyword id="KW-0963">Cytoplasm</keyword>
<keyword id="KW-0570">Pentose shunt</keyword>
<keyword id="KW-0704">Schiff base</keyword>
<keyword id="KW-0808">Transferase</keyword>
<evidence type="ECO:0000255" key="1">
    <source>
        <dbReference type="HAMAP-Rule" id="MF_00494"/>
    </source>
</evidence>
<name>TAL_SINMW</name>
<dbReference type="EC" id="2.2.1.2" evidence="1"/>
<dbReference type="EMBL" id="CP000738">
    <property type="protein sequence ID" value="ABR61757.1"/>
    <property type="molecule type" value="Genomic_DNA"/>
</dbReference>
<dbReference type="RefSeq" id="YP_001328592.1">
    <property type="nucleotide sequence ID" value="NC_009636.1"/>
</dbReference>
<dbReference type="SMR" id="A6UDM7"/>
<dbReference type="STRING" id="366394.Smed_2928"/>
<dbReference type="KEGG" id="smd:Smed_2928"/>
<dbReference type="PATRIC" id="fig|366394.8.peg.6146"/>
<dbReference type="eggNOG" id="COG0176">
    <property type="taxonomic scope" value="Bacteria"/>
</dbReference>
<dbReference type="HOGENOM" id="CLU_079764_0_0_5"/>
<dbReference type="OrthoDB" id="9807051at2"/>
<dbReference type="UniPathway" id="UPA00115">
    <property type="reaction ID" value="UER00414"/>
</dbReference>
<dbReference type="Proteomes" id="UP000001108">
    <property type="component" value="Chromosome"/>
</dbReference>
<dbReference type="GO" id="GO:0005737">
    <property type="term" value="C:cytoplasm"/>
    <property type="evidence" value="ECO:0007669"/>
    <property type="project" value="UniProtKB-SubCell"/>
</dbReference>
<dbReference type="GO" id="GO:0016832">
    <property type="term" value="F:aldehyde-lyase activity"/>
    <property type="evidence" value="ECO:0007669"/>
    <property type="project" value="InterPro"/>
</dbReference>
<dbReference type="GO" id="GO:0004801">
    <property type="term" value="F:transaldolase activity"/>
    <property type="evidence" value="ECO:0007669"/>
    <property type="project" value="UniProtKB-UniRule"/>
</dbReference>
<dbReference type="GO" id="GO:0005975">
    <property type="term" value="P:carbohydrate metabolic process"/>
    <property type="evidence" value="ECO:0007669"/>
    <property type="project" value="InterPro"/>
</dbReference>
<dbReference type="GO" id="GO:0006098">
    <property type="term" value="P:pentose-phosphate shunt"/>
    <property type="evidence" value="ECO:0007669"/>
    <property type="project" value="UniProtKB-UniRule"/>
</dbReference>
<dbReference type="CDD" id="cd00956">
    <property type="entry name" value="Transaldolase_FSA"/>
    <property type="match status" value="1"/>
</dbReference>
<dbReference type="FunFam" id="3.20.20.70:FF:000018">
    <property type="entry name" value="Probable transaldolase"/>
    <property type="match status" value="1"/>
</dbReference>
<dbReference type="Gene3D" id="3.20.20.70">
    <property type="entry name" value="Aldolase class I"/>
    <property type="match status" value="1"/>
</dbReference>
<dbReference type="HAMAP" id="MF_00494">
    <property type="entry name" value="Transaldolase_3b"/>
    <property type="match status" value="1"/>
</dbReference>
<dbReference type="InterPro" id="IPR013785">
    <property type="entry name" value="Aldolase_TIM"/>
</dbReference>
<dbReference type="InterPro" id="IPR001585">
    <property type="entry name" value="TAL/FSA"/>
</dbReference>
<dbReference type="InterPro" id="IPR022999">
    <property type="entry name" value="Transaldolase_3B"/>
</dbReference>
<dbReference type="InterPro" id="IPR004731">
    <property type="entry name" value="Transaldolase_3B/F6P_aldolase"/>
</dbReference>
<dbReference type="InterPro" id="IPR018225">
    <property type="entry name" value="Transaldolase_AS"/>
</dbReference>
<dbReference type="InterPro" id="IPR033919">
    <property type="entry name" value="TSA/FSA_arc/bac"/>
</dbReference>
<dbReference type="NCBIfam" id="TIGR00875">
    <property type="entry name" value="fsa_talC_mipB"/>
    <property type="match status" value="1"/>
</dbReference>
<dbReference type="PANTHER" id="PTHR10683:SF40">
    <property type="entry name" value="FRUCTOSE-6-PHOSPHATE ALDOLASE 1-RELATED"/>
    <property type="match status" value="1"/>
</dbReference>
<dbReference type="PANTHER" id="PTHR10683">
    <property type="entry name" value="TRANSALDOLASE"/>
    <property type="match status" value="1"/>
</dbReference>
<dbReference type="Pfam" id="PF00923">
    <property type="entry name" value="TAL_FSA"/>
    <property type="match status" value="1"/>
</dbReference>
<dbReference type="SUPFAM" id="SSF51569">
    <property type="entry name" value="Aldolase"/>
    <property type="match status" value="1"/>
</dbReference>
<dbReference type="PROSITE" id="PS01054">
    <property type="entry name" value="TRANSALDOLASE_1"/>
    <property type="match status" value="1"/>
</dbReference>
<dbReference type="PROSITE" id="PS00958">
    <property type="entry name" value="TRANSALDOLASE_2"/>
    <property type="match status" value="1"/>
</dbReference>
<gene>
    <name evidence="1" type="primary">tal</name>
    <name type="ordered locus">Smed_2928</name>
</gene>
<sequence>MKFFVDTADVKDIRELNDLGLLDGVTTNPSLILKAGRDIVEVTKEICSIVEGPVSAEVTATEYSAMMKEAAALSKIADNICIKLPLTLDGLKACKALTSDGHQTNVTLCFSANQALLAAKAGATFVSPFIGRLDDIAVDGMDLIREIRHIYDNYGYETEILAASVRTVNHVKEAALIGADVVTAPPATLKALVKHPLTDKGLETFLADWAKTGQKIA</sequence>
<accession>A6UDM7</accession>
<feature type="chain" id="PRO_1000060476" description="Probable transaldolase">
    <location>
        <begin position="1"/>
        <end position="217"/>
    </location>
</feature>
<feature type="active site" description="Schiff-base intermediate with substrate" evidence="1">
    <location>
        <position position="83"/>
    </location>
</feature>
<protein>
    <recommendedName>
        <fullName evidence="1">Probable transaldolase</fullName>
        <ecNumber evidence="1">2.2.1.2</ecNumber>
    </recommendedName>
</protein>
<organism>
    <name type="scientific">Sinorhizobium medicae (strain WSM419)</name>
    <name type="common">Ensifer medicae</name>
    <dbReference type="NCBI Taxonomy" id="366394"/>
    <lineage>
        <taxon>Bacteria</taxon>
        <taxon>Pseudomonadati</taxon>
        <taxon>Pseudomonadota</taxon>
        <taxon>Alphaproteobacteria</taxon>
        <taxon>Hyphomicrobiales</taxon>
        <taxon>Rhizobiaceae</taxon>
        <taxon>Sinorhizobium/Ensifer group</taxon>
        <taxon>Sinorhizobium</taxon>
    </lineage>
</organism>
<comment type="function">
    <text evidence="1">Transaldolase is important for the balance of metabolites in the pentose-phosphate pathway.</text>
</comment>
<comment type="catalytic activity">
    <reaction evidence="1">
        <text>D-sedoheptulose 7-phosphate + D-glyceraldehyde 3-phosphate = D-erythrose 4-phosphate + beta-D-fructose 6-phosphate</text>
        <dbReference type="Rhea" id="RHEA:17053"/>
        <dbReference type="ChEBI" id="CHEBI:16897"/>
        <dbReference type="ChEBI" id="CHEBI:57483"/>
        <dbReference type="ChEBI" id="CHEBI:57634"/>
        <dbReference type="ChEBI" id="CHEBI:59776"/>
        <dbReference type="EC" id="2.2.1.2"/>
    </reaction>
</comment>
<comment type="pathway">
    <text evidence="1">Carbohydrate degradation; pentose phosphate pathway; D-glyceraldehyde 3-phosphate and beta-D-fructose 6-phosphate from D-ribose 5-phosphate and D-xylulose 5-phosphate (non-oxidative stage): step 2/3.</text>
</comment>
<comment type="subcellular location">
    <subcellularLocation>
        <location evidence="1">Cytoplasm</location>
    </subcellularLocation>
</comment>
<comment type="similarity">
    <text evidence="1">Belongs to the transaldolase family. Type 3B subfamily.</text>
</comment>
<proteinExistence type="inferred from homology"/>
<reference key="1">
    <citation type="submission" date="2007-06" db="EMBL/GenBank/DDBJ databases">
        <title>Complete sequence of Sinorhizobium medicae WSM419 chromosome.</title>
        <authorList>
            <consortium name="US DOE Joint Genome Institute"/>
            <person name="Copeland A."/>
            <person name="Lucas S."/>
            <person name="Lapidus A."/>
            <person name="Barry K."/>
            <person name="Glavina del Rio T."/>
            <person name="Dalin E."/>
            <person name="Tice H."/>
            <person name="Pitluck S."/>
            <person name="Chain P."/>
            <person name="Malfatti S."/>
            <person name="Shin M."/>
            <person name="Vergez L."/>
            <person name="Schmutz J."/>
            <person name="Larimer F."/>
            <person name="Land M."/>
            <person name="Hauser L."/>
            <person name="Kyrpides N."/>
            <person name="Mikhailova N."/>
            <person name="Reeve W.G."/>
            <person name="Richardson P."/>
        </authorList>
    </citation>
    <scope>NUCLEOTIDE SEQUENCE [LARGE SCALE GENOMIC DNA]</scope>
    <source>
        <strain>WSM419</strain>
    </source>
</reference>